<dbReference type="EMBL" id="X97644">
    <property type="protein sequence ID" value="CAA66241.1"/>
    <property type="molecule type" value="Genomic_DNA"/>
</dbReference>
<dbReference type="EMBL" id="Z72633">
    <property type="protein sequence ID" value="CAA96818.1"/>
    <property type="molecule type" value="Genomic_DNA"/>
</dbReference>
<dbReference type="EMBL" id="BK006941">
    <property type="protein sequence ID" value="DAA07997.1"/>
    <property type="molecule type" value="Genomic_DNA"/>
</dbReference>
<dbReference type="PIR" id="S64119">
    <property type="entry name" value="S64119"/>
</dbReference>
<dbReference type="RefSeq" id="NP_011404.1">
    <property type="nucleotide sequence ID" value="NM_001180976.1"/>
</dbReference>
<dbReference type="PDB" id="5SUI">
    <property type="method" value="X-ray"/>
    <property type="resolution" value="1.30 A"/>
    <property type="chains" value="A=1-434"/>
</dbReference>
<dbReference type="PDB" id="5SUM">
    <property type="method" value="X-ray"/>
    <property type="resolution" value="2.80 A"/>
    <property type="chains" value="A/B=1-463"/>
</dbReference>
<dbReference type="PDB" id="5Z3G">
    <property type="method" value="EM"/>
    <property type="resolution" value="3.65 A"/>
    <property type="chains" value="V=1-463"/>
</dbReference>
<dbReference type="PDB" id="6C0F">
    <property type="method" value="EM"/>
    <property type="resolution" value="3.70 A"/>
    <property type="chains" value="A=1-463"/>
</dbReference>
<dbReference type="PDB" id="6CB1">
    <property type="method" value="EM"/>
    <property type="resolution" value="4.60 A"/>
    <property type="chains" value="A=1-463"/>
</dbReference>
<dbReference type="PDB" id="6EM1">
    <property type="method" value="EM"/>
    <property type="resolution" value="3.60 A"/>
    <property type="chains" value="5=1-463"/>
</dbReference>
<dbReference type="PDB" id="6EM3">
    <property type="method" value="EM"/>
    <property type="resolution" value="3.20 A"/>
    <property type="chains" value="5=1-463"/>
</dbReference>
<dbReference type="PDB" id="6EM4">
    <property type="method" value="EM"/>
    <property type="resolution" value="4.10 A"/>
    <property type="chains" value="5=1-463"/>
</dbReference>
<dbReference type="PDB" id="6EM5">
    <property type="method" value="EM"/>
    <property type="resolution" value="4.30 A"/>
    <property type="chains" value="5=1-463"/>
</dbReference>
<dbReference type="PDB" id="6EN7">
    <property type="method" value="X-ray"/>
    <property type="resolution" value="2.40 A"/>
    <property type="chains" value="A=1-463"/>
</dbReference>
<dbReference type="PDB" id="7OHS">
    <property type="method" value="EM"/>
    <property type="resolution" value="4.38 A"/>
    <property type="chains" value="5=1-463"/>
</dbReference>
<dbReference type="PDB" id="7OHW">
    <property type="method" value="EM"/>
    <property type="resolution" value="3.50 A"/>
    <property type="chains" value="5=1-463"/>
</dbReference>
<dbReference type="PDB" id="7OHX">
    <property type="method" value="EM"/>
    <property type="resolution" value="3.30 A"/>
    <property type="chains" value="5=1-463"/>
</dbReference>
<dbReference type="PDB" id="8V83">
    <property type="method" value="EM"/>
    <property type="resolution" value="2.53 A"/>
    <property type="chains" value="I=1-463"/>
</dbReference>
<dbReference type="PDB" id="8V84">
    <property type="method" value="EM"/>
    <property type="resolution" value="2.70 A"/>
    <property type="chains" value="I=1-463"/>
</dbReference>
<dbReference type="PDBsum" id="5SUI"/>
<dbReference type="PDBsum" id="5SUM"/>
<dbReference type="PDBsum" id="5Z3G"/>
<dbReference type="PDBsum" id="6C0F"/>
<dbReference type="PDBsum" id="6CB1"/>
<dbReference type="PDBsum" id="6EM1"/>
<dbReference type="PDBsum" id="6EM3"/>
<dbReference type="PDBsum" id="6EM4"/>
<dbReference type="PDBsum" id="6EM5"/>
<dbReference type="PDBsum" id="6EN7"/>
<dbReference type="PDBsum" id="7OHS"/>
<dbReference type="PDBsum" id="7OHW"/>
<dbReference type="PDBsum" id="7OHX"/>
<dbReference type="PDBsum" id="8V83"/>
<dbReference type="PDBsum" id="8V84"/>
<dbReference type="EMDB" id="EMD-12907"/>
<dbReference type="EMDB" id="EMD-12911"/>
<dbReference type="EMDB" id="EMD-12912"/>
<dbReference type="EMDB" id="EMD-43017"/>
<dbReference type="EMDB" id="EMD-43021"/>
<dbReference type="EMDB" id="EMD-6878"/>
<dbReference type="EMDB" id="EMD-7324"/>
<dbReference type="EMDB" id="EMD-7445"/>
<dbReference type="SMR" id="P53136"/>
<dbReference type="BioGRID" id="33140">
    <property type="interactions" value="253"/>
</dbReference>
<dbReference type="DIP" id="DIP-6415N"/>
<dbReference type="FunCoup" id="P53136">
    <property type="interactions" value="771"/>
</dbReference>
<dbReference type="IntAct" id="P53136">
    <property type="interactions" value="72"/>
</dbReference>
<dbReference type="MINT" id="P53136"/>
<dbReference type="STRING" id="4932.YGL111W"/>
<dbReference type="iPTMnet" id="P53136"/>
<dbReference type="PaxDb" id="4932-YGL111W"/>
<dbReference type="PeptideAtlas" id="P53136"/>
<dbReference type="EnsemblFungi" id="YGL111W_mRNA">
    <property type="protein sequence ID" value="YGL111W"/>
    <property type="gene ID" value="YGL111W"/>
</dbReference>
<dbReference type="GeneID" id="852767"/>
<dbReference type="KEGG" id="sce:YGL111W"/>
<dbReference type="AGR" id="SGD:S000003079"/>
<dbReference type="SGD" id="S000003079">
    <property type="gene designation" value="NSA1"/>
</dbReference>
<dbReference type="VEuPathDB" id="FungiDB:YGL111W"/>
<dbReference type="eggNOG" id="KOG3881">
    <property type="taxonomic scope" value="Eukaryota"/>
</dbReference>
<dbReference type="GeneTree" id="ENSGT00390000015119"/>
<dbReference type="HOGENOM" id="CLU_033769_4_0_1"/>
<dbReference type="InParanoid" id="P53136"/>
<dbReference type="OMA" id="IWEAKNV"/>
<dbReference type="OrthoDB" id="18388at2759"/>
<dbReference type="BioCyc" id="YEAST:G3O-30609-MONOMER"/>
<dbReference type="BioGRID-ORCS" id="852767">
    <property type="hits" value="2 hits in 10 CRISPR screens"/>
</dbReference>
<dbReference type="PRO" id="PR:P53136"/>
<dbReference type="Proteomes" id="UP000002311">
    <property type="component" value="Chromosome VII"/>
</dbReference>
<dbReference type="RNAct" id="P53136">
    <property type="molecule type" value="protein"/>
</dbReference>
<dbReference type="GO" id="GO:0005730">
    <property type="term" value="C:nucleolus"/>
    <property type="evidence" value="ECO:0007005"/>
    <property type="project" value="SGD"/>
</dbReference>
<dbReference type="GO" id="GO:0005634">
    <property type="term" value="C:nucleus"/>
    <property type="evidence" value="ECO:0007005"/>
    <property type="project" value="SGD"/>
</dbReference>
<dbReference type="GO" id="GO:0030687">
    <property type="term" value="C:preribosome, large subunit precursor"/>
    <property type="evidence" value="ECO:0000314"/>
    <property type="project" value="SGD"/>
</dbReference>
<dbReference type="GO" id="GO:0042273">
    <property type="term" value="P:ribosomal large subunit biogenesis"/>
    <property type="evidence" value="ECO:0000315"/>
    <property type="project" value="SGD"/>
</dbReference>
<dbReference type="GO" id="GO:0006364">
    <property type="term" value="P:rRNA processing"/>
    <property type="evidence" value="ECO:0007669"/>
    <property type="project" value="UniProtKB-KW"/>
</dbReference>
<dbReference type="CDD" id="cd22858">
    <property type="entry name" value="Nsa1"/>
    <property type="match status" value="1"/>
</dbReference>
<dbReference type="DisProt" id="DP02195"/>
<dbReference type="InterPro" id="IPR036322">
    <property type="entry name" value="WD40_repeat_dom_sf"/>
</dbReference>
<dbReference type="InterPro" id="IPR037379">
    <property type="entry name" value="WDR74/Nsa1"/>
</dbReference>
<dbReference type="PANTHER" id="PTHR16038">
    <property type="entry name" value="NOP SEVEN ASSOCIATED PROTEIN 1"/>
    <property type="match status" value="1"/>
</dbReference>
<dbReference type="PANTHER" id="PTHR16038:SF4">
    <property type="entry name" value="WD REPEAT-CONTAINING PROTEIN 74"/>
    <property type="match status" value="1"/>
</dbReference>
<dbReference type="SUPFAM" id="SSF50978">
    <property type="entry name" value="WD40 repeat-like"/>
    <property type="match status" value="1"/>
</dbReference>
<reference key="1">
    <citation type="journal article" date="1997" name="Yeast">
        <title>The genes encoding the transcription factor yTAFII60, the G4p1 protein and a putative glucose transporter are contained in a 12.3 kb DNA fragment on the left arm of Saccharomyces cerevisiae chromosome VII.</title>
        <authorList>
            <person name="Paoluzi S."/>
            <person name="Minenkova O."/>
            <person name="Castagnoli L."/>
        </authorList>
    </citation>
    <scope>NUCLEOTIDE SEQUENCE [GENOMIC DNA]</scope>
</reference>
<reference key="2">
    <citation type="journal article" date="1997" name="Nature">
        <title>The nucleotide sequence of Saccharomyces cerevisiae chromosome VII.</title>
        <authorList>
            <person name="Tettelin H."/>
            <person name="Agostoni-Carbone M.L."/>
            <person name="Albermann K."/>
            <person name="Albers M."/>
            <person name="Arroyo J."/>
            <person name="Backes U."/>
            <person name="Barreiros T."/>
            <person name="Bertani I."/>
            <person name="Bjourson A.J."/>
            <person name="Brueckner M."/>
            <person name="Bruschi C.V."/>
            <person name="Carignani G."/>
            <person name="Castagnoli L."/>
            <person name="Cerdan E."/>
            <person name="Clemente M.L."/>
            <person name="Coblenz A."/>
            <person name="Coglievina M."/>
            <person name="Coissac E."/>
            <person name="Defoor E."/>
            <person name="Del Bino S."/>
            <person name="Delius H."/>
            <person name="Delneri D."/>
            <person name="de Wergifosse P."/>
            <person name="Dujon B."/>
            <person name="Durand P."/>
            <person name="Entian K.-D."/>
            <person name="Eraso P."/>
            <person name="Escribano V."/>
            <person name="Fabiani L."/>
            <person name="Fartmann B."/>
            <person name="Feroli F."/>
            <person name="Feuermann M."/>
            <person name="Frontali L."/>
            <person name="Garcia-Gonzalez M."/>
            <person name="Garcia-Saez M.I."/>
            <person name="Goffeau A."/>
            <person name="Guerreiro P."/>
            <person name="Hani J."/>
            <person name="Hansen M."/>
            <person name="Hebling U."/>
            <person name="Hernandez K."/>
            <person name="Heumann K."/>
            <person name="Hilger F."/>
            <person name="Hofmann B."/>
            <person name="Indge K.J."/>
            <person name="James C.M."/>
            <person name="Klima R."/>
            <person name="Koetter P."/>
            <person name="Kramer B."/>
            <person name="Kramer W."/>
            <person name="Lauquin G."/>
            <person name="Leuther H."/>
            <person name="Louis E.J."/>
            <person name="Maillier E."/>
            <person name="Marconi A."/>
            <person name="Martegani E."/>
            <person name="Mazon M.J."/>
            <person name="Mazzoni C."/>
            <person name="McReynolds A.D.K."/>
            <person name="Melchioretto P."/>
            <person name="Mewes H.-W."/>
            <person name="Minenkova O."/>
            <person name="Mueller-Auer S."/>
            <person name="Nawrocki A."/>
            <person name="Netter P."/>
            <person name="Neu R."/>
            <person name="Nombela C."/>
            <person name="Oliver S.G."/>
            <person name="Panzeri L."/>
            <person name="Paoluzi S."/>
            <person name="Plevani P."/>
            <person name="Portetelle D."/>
            <person name="Portillo F."/>
            <person name="Potier S."/>
            <person name="Purnelle B."/>
            <person name="Rieger M."/>
            <person name="Riles L."/>
            <person name="Rinaldi T."/>
            <person name="Robben J."/>
            <person name="Rodrigues-Pousada C."/>
            <person name="Rodriguez-Belmonte E."/>
            <person name="Rodriguez-Torres A.M."/>
            <person name="Rose M."/>
            <person name="Ruzzi M."/>
            <person name="Saliola M."/>
            <person name="Sanchez-Perez M."/>
            <person name="Schaefer B."/>
            <person name="Schaefer M."/>
            <person name="Scharfe M."/>
            <person name="Schmidheini T."/>
            <person name="Schreer A."/>
            <person name="Skala J."/>
            <person name="Souciet J.-L."/>
            <person name="Steensma H.Y."/>
            <person name="Talla E."/>
            <person name="Thierry A."/>
            <person name="Vandenbol M."/>
            <person name="van der Aart Q.J.M."/>
            <person name="Van Dyck L."/>
            <person name="Vanoni M."/>
            <person name="Verhasselt P."/>
            <person name="Voet M."/>
            <person name="Volckaert G."/>
            <person name="Wambutt R."/>
            <person name="Watson M.D."/>
            <person name="Weber N."/>
            <person name="Wedler E."/>
            <person name="Wedler H."/>
            <person name="Wipfli P."/>
            <person name="Wolf K."/>
            <person name="Wright L.F."/>
            <person name="Zaccaria P."/>
            <person name="Zimmermann M."/>
            <person name="Zollner A."/>
            <person name="Kleine K."/>
        </authorList>
    </citation>
    <scope>NUCLEOTIDE SEQUENCE [LARGE SCALE GENOMIC DNA]</scope>
    <source>
        <strain>ATCC 204508 / S288c</strain>
    </source>
</reference>
<reference key="3">
    <citation type="journal article" date="2014" name="G3 (Bethesda)">
        <title>The reference genome sequence of Saccharomyces cerevisiae: Then and now.</title>
        <authorList>
            <person name="Engel S.R."/>
            <person name="Dietrich F.S."/>
            <person name="Fisk D.G."/>
            <person name="Binkley G."/>
            <person name="Balakrishnan R."/>
            <person name="Costanzo M.C."/>
            <person name="Dwight S.S."/>
            <person name="Hitz B.C."/>
            <person name="Karra K."/>
            <person name="Nash R.S."/>
            <person name="Weng S."/>
            <person name="Wong E.D."/>
            <person name="Lloyd P."/>
            <person name="Skrzypek M.S."/>
            <person name="Miyasato S.R."/>
            <person name="Simison M."/>
            <person name="Cherry J.M."/>
        </authorList>
    </citation>
    <scope>GENOME REANNOTATION</scope>
    <source>
        <strain>ATCC 204508 / S288c</strain>
    </source>
</reference>
<reference key="4">
    <citation type="journal article" date="2001" name="Mol. Cell">
        <title>Composition and functional characterization of yeast 66S ribosome assembly intermediates.</title>
        <authorList>
            <person name="Harnpicharnchai P."/>
            <person name="Jakovljevic J."/>
            <person name="Horsey E."/>
            <person name="Miles T."/>
            <person name="Roman J."/>
            <person name="Rout M."/>
            <person name="Meagher D."/>
            <person name="Imai B."/>
            <person name="Guo Y."/>
            <person name="Brame C.J."/>
            <person name="Shabanowitz J."/>
            <person name="Hunt D.F."/>
            <person name="Woolford J.L. Jr."/>
        </authorList>
    </citation>
    <scope>IDENTIFICATION IN THE PRE-66S RIBOSOMAL PARTICLE</scope>
    <scope>INTERACTION WITH NOP7</scope>
    <scope>IDENTIFICATION BY MASS SPECTROMETRY</scope>
</reference>
<reference key="5">
    <citation type="journal article" date="2003" name="Nature">
        <title>Global analysis of protein localization in budding yeast.</title>
        <authorList>
            <person name="Huh W.-K."/>
            <person name="Falvo J.V."/>
            <person name="Gerke L.C."/>
            <person name="Carroll A.S."/>
            <person name="Howson R.W."/>
            <person name="Weissman J.S."/>
            <person name="O'Shea E.K."/>
        </authorList>
    </citation>
    <scope>SUBCELLULAR LOCATION [LARGE SCALE ANALYSIS]</scope>
</reference>
<reference key="6">
    <citation type="journal article" date="2003" name="Nature">
        <title>Global analysis of protein expression in yeast.</title>
        <authorList>
            <person name="Ghaemmaghami S."/>
            <person name="Huh W.-K."/>
            <person name="Bower K."/>
            <person name="Howson R.W."/>
            <person name="Belle A."/>
            <person name="Dephoure N."/>
            <person name="O'Shea E.K."/>
            <person name="Weissman J.S."/>
        </authorList>
    </citation>
    <scope>LEVEL OF PROTEIN EXPRESSION [LARGE SCALE ANALYSIS]</scope>
</reference>
<reference key="7">
    <citation type="journal article" date="2004" name="RNA">
        <title>Role of the yeast Rrp1 protein in the dynamics of pre-ribosome maturation.</title>
        <authorList>
            <person name="Horsey E.W."/>
            <person name="Jakovljevic J."/>
            <person name="Miles T.D."/>
            <person name="Harnpicharnchai P."/>
            <person name="Woolford J.L. Jr."/>
        </authorList>
    </citation>
    <scope>IDENTIFICATION IN THE PRE-66S RIBOSOMAL PARTICLE</scope>
    <scope>INTERACTION WITH RRP1</scope>
    <scope>IDENTIFICATION BY MASS SPECTROMETRY</scope>
</reference>
<reference key="8">
    <citation type="journal article" date="2005" name="RNA">
        <title>Rrp15p, a novel component of pre-ribosomal particles required for 60S ribosome subunit maturation.</title>
        <authorList>
            <person name="De Marchis M.L."/>
            <person name="Giorgi A."/>
            <person name="Schinina M.E."/>
            <person name="Bozzoni I."/>
            <person name="Fatica A."/>
        </authorList>
    </citation>
    <scope>INTERACTION WITH RRP5</scope>
    <scope>IDENTIFICATION BY MASS SPECTROMETRY</scope>
</reference>
<reference key="9">
    <citation type="journal article" date="2006" name="Yeast">
        <title>The budding yeast rRNA and ribosome biosynthesis (RRB) regulon contains over 200 genes.</title>
        <authorList>
            <person name="Wade C.H."/>
            <person name="Umbarger M.A."/>
            <person name="McAlear M.A."/>
        </authorList>
    </citation>
    <scope>FUNCTION</scope>
</reference>
<reference key="10">
    <citation type="journal article" date="2007" name="Mol. Genet. Genomics">
        <title>In vivo functional characterization of the Saccharomyces cerevisiae 60S biogenesis GTPase Nog1.</title>
        <authorList>
            <person name="Fuentes J.L."/>
            <person name="Datta K."/>
            <person name="Sullivan S.M."/>
            <person name="Walker A."/>
            <person name="Maddock J.R."/>
        </authorList>
    </citation>
    <scope>INTERACTION WITH NOP7</scope>
    <scope>IDENTIFICATION BY MASS SPECTROMETRY</scope>
</reference>
<reference evidence="9 10" key="11">
    <citation type="journal article" date="2017" name="Structure">
        <title>Structural Analysis Reveals Features of Ribosome Assembly Factor Nsa1/WDR74 Important for Localization and Interaction with Rix7/NVL2.</title>
        <authorList>
            <person name="Lo Y.H."/>
            <person name="Romes E.M."/>
            <person name="Pillon M.C."/>
            <person name="Sobhany M."/>
            <person name="Stanley R.E."/>
        </authorList>
    </citation>
    <scope>X-RAY CRYSTALLOGRAPHY (1.30 ANGSTROMS) OF 1-434</scope>
</reference>
<keyword id="KW-0002">3D-structure</keyword>
<keyword id="KW-0539">Nucleus</keyword>
<keyword id="KW-1185">Reference proteome</keyword>
<keyword id="KW-0690">Ribosome biogenesis</keyword>
<keyword id="KW-0698">rRNA processing</keyword>
<evidence type="ECO:0000269" key="1">
    <source>
    </source>
</evidence>
<evidence type="ECO:0000269" key="2">
    <source>
    </source>
</evidence>
<evidence type="ECO:0000269" key="3">
    <source>
    </source>
</evidence>
<evidence type="ECO:0000269" key="4">
    <source>
    </source>
</evidence>
<evidence type="ECO:0000269" key="5">
    <source>
    </source>
</evidence>
<evidence type="ECO:0000269" key="6">
    <source>
    </source>
</evidence>
<evidence type="ECO:0000269" key="7">
    <source>
    </source>
</evidence>
<evidence type="ECO:0000305" key="8"/>
<evidence type="ECO:0007744" key="9">
    <source>
        <dbReference type="PDB" id="5SUI"/>
    </source>
</evidence>
<evidence type="ECO:0007744" key="10">
    <source>
        <dbReference type="PDB" id="5SUM"/>
    </source>
</evidence>
<evidence type="ECO:0007829" key="11">
    <source>
        <dbReference type="PDB" id="5SUI"/>
    </source>
</evidence>
<evidence type="ECO:0007829" key="12">
    <source>
        <dbReference type="PDB" id="5SUM"/>
    </source>
</evidence>
<evidence type="ECO:0007829" key="13">
    <source>
        <dbReference type="PDB" id="6EM3"/>
    </source>
</evidence>
<proteinExistence type="evidence at protein level"/>
<comment type="function">
    <text evidence="6">Involved in the biogenesis of the 60S ribosomal subunit.</text>
</comment>
<comment type="subunit">
    <text evidence="1 4 5 7">Component of the pre-66S ribosomal particle. Interacts with NOP7, RRP1 and RRP5.</text>
</comment>
<comment type="interaction">
    <interactant intactId="EBI-23920">
        <id>P53136</id>
    </interactant>
    <interactant intactId="EBI-12105">
        <id>Q02892</id>
        <label>NOG1</label>
    </interactant>
    <organismsDiffer>false</organismsDiffer>
    <experiments>5</experiments>
</comment>
<comment type="subcellular location">
    <subcellularLocation>
        <location evidence="2">Nucleus</location>
        <location evidence="2">Nucleolus</location>
    </subcellularLocation>
</comment>
<comment type="miscellaneous">
    <text evidence="3">Present with 2740 molecules/cell in log phase SD medium.</text>
</comment>
<comment type="similarity">
    <text evidence="8">Belongs to the NSA1 family.</text>
</comment>
<gene>
    <name type="primary">NSA1</name>
    <name type="ordered locus">YGL111W</name>
    <name type="ORF">G2990</name>
</gene>
<name>NSA1_YEAST</name>
<protein>
    <recommendedName>
        <fullName>Ribosome biogenesis protein NSA1</fullName>
    </recommendedName>
    <alternativeName>
        <fullName>NOP7-associated protein 1</fullName>
    </alternativeName>
</protein>
<organism>
    <name type="scientific">Saccharomyces cerevisiae (strain ATCC 204508 / S288c)</name>
    <name type="common">Baker's yeast</name>
    <dbReference type="NCBI Taxonomy" id="559292"/>
    <lineage>
        <taxon>Eukaryota</taxon>
        <taxon>Fungi</taxon>
        <taxon>Dikarya</taxon>
        <taxon>Ascomycota</taxon>
        <taxon>Saccharomycotina</taxon>
        <taxon>Saccharomycetes</taxon>
        <taxon>Saccharomycetales</taxon>
        <taxon>Saccharomycetaceae</taxon>
        <taxon>Saccharomyces</taxon>
    </lineage>
</organism>
<accession>P53136</accession>
<accession>D6VU36</accession>
<feature type="chain" id="PRO_0000202748" description="Ribosome biogenesis protein NSA1">
    <location>
        <begin position="1"/>
        <end position="463"/>
    </location>
</feature>
<feature type="strand" evidence="11">
    <location>
        <begin position="1"/>
        <end position="7"/>
    </location>
</feature>
<feature type="helix" evidence="11">
    <location>
        <begin position="8"/>
        <end position="10"/>
    </location>
</feature>
<feature type="strand" evidence="11">
    <location>
        <begin position="12"/>
        <end position="18"/>
    </location>
</feature>
<feature type="strand" evidence="13">
    <location>
        <begin position="22"/>
        <end position="30"/>
    </location>
</feature>
<feature type="strand" evidence="11">
    <location>
        <begin position="33"/>
        <end position="38"/>
    </location>
</feature>
<feature type="helix" evidence="11">
    <location>
        <begin position="43"/>
        <end position="45"/>
    </location>
</feature>
<feature type="strand" evidence="11">
    <location>
        <begin position="47"/>
        <end position="54"/>
    </location>
</feature>
<feature type="strand" evidence="11">
    <location>
        <begin position="57"/>
        <end position="62"/>
    </location>
</feature>
<feature type="turn" evidence="11">
    <location>
        <begin position="63"/>
        <end position="65"/>
    </location>
</feature>
<feature type="strand" evidence="11">
    <location>
        <begin position="66"/>
        <end position="76"/>
    </location>
</feature>
<feature type="strand" evidence="11">
    <location>
        <begin position="102"/>
        <end position="114"/>
    </location>
</feature>
<feature type="helix" evidence="12">
    <location>
        <begin position="120"/>
        <end position="124"/>
    </location>
</feature>
<feature type="strand" evidence="13">
    <location>
        <begin position="128"/>
        <end position="132"/>
    </location>
</feature>
<feature type="strand" evidence="11">
    <location>
        <begin position="140"/>
        <end position="146"/>
    </location>
</feature>
<feature type="strand" evidence="11">
    <location>
        <begin position="154"/>
        <end position="159"/>
    </location>
</feature>
<feature type="strand" evidence="11">
    <location>
        <begin position="162"/>
        <end position="169"/>
    </location>
</feature>
<feature type="strand" evidence="11">
    <location>
        <begin position="173"/>
        <end position="182"/>
    </location>
</feature>
<feature type="strand" evidence="11">
    <location>
        <begin position="188"/>
        <end position="192"/>
    </location>
</feature>
<feature type="strand" evidence="11">
    <location>
        <begin position="198"/>
        <end position="201"/>
    </location>
</feature>
<feature type="strand" evidence="11">
    <location>
        <begin position="203"/>
        <end position="209"/>
    </location>
</feature>
<feature type="strand" evidence="11">
    <location>
        <begin position="212"/>
        <end position="219"/>
    </location>
</feature>
<feature type="strand" evidence="11">
    <location>
        <begin position="226"/>
        <end position="231"/>
    </location>
</feature>
<feature type="strand" evidence="11">
    <location>
        <begin position="248"/>
        <end position="254"/>
    </location>
</feature>
<feature type="strand" evidence="13">
    <location>
        <begin position="263"/>
        <end position="265"/>
    </location>
</feature>
<feature type="strand" evidence="11">
    <location>
        <begin position="269"/>
        <end position="274"/>
    </location>
</feature>
<feature type="strand" evidence="11">
    <location>
        <begin position="277"/>
        <end position="283"/>
    </location>
</feature>
<feature type="turn" evidence="11">
    <location>
        <begin position="284"/>
        <end position="286"/>
    </location>
</feature>
<feature type="strand" evidence="11">
    <location>
        <begin position="291"/>
        <end position="295"/>
    </location>
</feature>
<feature type="helix" evidence="11">
    <location>
        <begin position="298"/>
        <end position="300"/>
    </location>
</feature>
<feature type="strand" evidence="11">
    <location>
        <begin position="303"/>
        <end position="308"/>
    </location>
</feature>
<feature type="helix" evidence="11">
    <location>
        <begin position="328"/>
        <end position="330"/>
    </location>
</feature>
<feature type="strand" evidence="11">
    <location>
        <begin position="332"/>
        <end position="340"/>
    </location>
</feature>
<feature type="strand" evidence="11">
    <location>
        <begin position="342"/>
        <end position="346"/>
    </location>
</feature>
<feature type="strand" evidence="11">
    <location>
        <begin position="351"/>
        <end position="356"/>
    </location>
</feature>
<feature type="turn" evidence="11">
    <location>
        <begin position="357"/>
        <end position="359"/>
    </location>
</feature>
<feature type="strand" evidence="11">
    <location>
        <begin position="366"/>
        <end position="370"/>
    </location>
</feature>
<feature type="turn" evidence="11">
    <location>
        <begin position="371"/>
        <end position="373"/>
    </location>
</feature>
<feature type="strand" evidence="11">
    <location>
        <begin position="374"/>
        <end position="378"/>
    </location>
</feature>
<feature type="strand" evidence="11">
    <location>
        <begin position="383"/>
        <end position="388"/>
    </location>
</feature>
<feature type="turn" evidence="11">
    <location>
        <begin position="389"/>
        <end position="391"/>
    </location>
</feature>
<feature type="strand" evidence="11">
    <location>
        <begin position="394"/>
        <end position="399"/>
    </location>
</feature>
<feature type="strand" evidence="11">
    <location>
        <begin position="404"/>
        <end position="409"/>
    </location>
</feature>
<sequence length="463" mass="51907">MRLLVSCVDSGSIKEVLCNIGTDTSVQSALQPFHVAPHLAEGLKAYVDRMWVISEDEAILARNSGVVELVKISKHLKENEALQVDPKGESKNEKSLSDDLPKFDISEFEITSSVSDLFDDAKLESLSSKSVKRTKLVDGFVTLCPIKKDSSNNTFVAATKSGLLHIIKKGEDKKLIKLASLGLKAPVEFLQLYDLEDTDTDKYIFAYGGEENLIKLVEIDSSFQSLKQIWEAKNVKNDRLDMRVPVWPMALRFLEPSPGKTEKGKLNYQFAAITRWSHLTKYSTQHGRKPFAQIDLLPNREPLSQMEVFDAKGENVVSSLGNFQSETFNELNVITTDYKKNVFKFDGNGRMLGKVGRDDITGSSTYIHVHDGKYLLQGGLDRYVRIFDIKTNKMLVKVYVGSRINFIVMLDDVEIEMPLSPSAKAAKGKQKRKVTELEEDADELWNKLEGKVAASKASKKSKI</sequence>